<feature type="chain" id="PRO_1000018085" description="Arginine--tRNA ligase">
    <location>
        <begin position="1"/>
        <end position="558"/>
    </location>
</feature>
<feature type="short sequence motif" description="'HIGH' region">
    <location>
        <begin position="129"/>
        <end position="139"/>
    </location>
</feature>
<gene>
    <name evidence="1" type="primary">argS</name>
    <name type="ordered locus">Pnap_3701</name>
</gene>
<organism>
    <name type="scientific">Polaromonas naphthalenivorans (strain CJ2)</name>
    <dbReference type="NCBI Taxonomy" id="365044"/>
    <lineage>
        <taxon>Bacteria</taxon>
        <taxon>Pseudomonadati</taxon>
        <taxon>Pseudomonadota</taxon>
        <taxon>Betaproteobacteria</taxon>
        <taxon>Burkholderiales</taxon>
        <taxon>Comamonadaceae</taxon>
        <taxon>Polaromonas</taxon>
    </lineage>
</organism>
<comment type="catalytic activity">
    <reaction evidence="1">
        <text>tRNA(Arg) + L-arginine + ATP = L-arginyl-tRNA(Arg) + AMP + diphosphate</text>
        <dbReference type="Rhea" id="RHEA:20301"/>
        <dbReference type="Rhea" id="RHEA-COMP:9658"/>
        <dbReference type="Rhea" id="RHEA-COMP:9673"/>
        <dbReference type="ChEBI" id="CHEBI:30616"/>
        <dbReference type="ChEBI" id="CHEBI:32682"/>
        <dbReference type="ChEBI" id="CHEBI:33019"/>
        <dbReference type="ChEBI" id="CHEBI:78442"/>
        <dbReference type="ChEBI" id="CHEBI:78513"/>
        <dbReference type="ChEBI" id="CHEBI:456215"/>
        <dbReference type="EC" id="6.1.1.19"/>
    </reaction>
</comment>
<comment type="subunit">
    <text evidence="1">Monomer.</text>
</comment>
<comment type="subcellular location">
    <subcellularLocation>
        <location evidence="1">Cytoplasm</location>
    </subcellularLocation>
</comment>
<comment type="similarity">
    <text evidence="1">Belongs to the class-I aminoacyl-tRNA synthetase family.</text>
</comment>
<proteinExistence type="inferred from homology"/>
<sequence length="558" mass="61642">MLSIKKDLLSALAIALEQLSPGAGDKAAFESPKVAAHGDFACTAAMQLAKPLKQNPRQTAESLRARLLLAPAFERWVEAIEIAGPGFINIRLKPAAKQETVREVLQAGAQYGTQPTDHERKMIVEFVSANPTGPLHVGHGRQAALGDAICNLHATQGLDVWREFYYNDAGVQIHTLATSTQARAKGLKPGDANWPEPAYNGDYIDDIARDFLAKKTVKSDDREFTASGDVEDMEAIRQFAVAYLRHEQDLDLKAFSVKFDNYYLESSLYSSGRVESTVQRLKDAGKTYEQDGALWLRSTDYGDDKDRVMKKSDGTFTYFVPDVAYHLAKWERGFTKAVNIQGMDHHGTIARVRAGLQAANAGIPAGYPDYVLHTMVRVVRHGEEVKISKRAGSYVTLRDLIEWTSADAVRFFLLSRKPDTEYIFDIDLALAKNNENPVYYVQYAHARICSILTAWGGDESQFGHVDLSPLASPQAQALMLLLAKYTDMLSHAAAGFAPHDVAFYLRELAACYHSYYDAERILVDDEAVKLARLALVAATAQVLHNGLAVLGVSAPRKM</sequence>
<evidence type="ECO:0000255" key="1">
    <source>
        <dbReference type="HAMAP-Rule" id="MF_00123"/>
    </source>
</evidence>
<reference key="1">
    <citation type="journal article" date="2009" name="Environ. Microbiol.">
        <title>The genome of Polaromonas naphthalenivorans strain CJ2, isolated from coal tar-contaminated sediment, reveals physiological and metabolic versatility and evolution through extensive horizontal gene transfer.</title>
        <authorList>
            <person name="Yagi J.M."/>
            <person name="Sims D."/>
            <person name="Brettin T."/>
            <person name="Bruce D."/>
            <person name="Madsen E.L."/>
        </authorList>
    </citation>
    <scope>NUCLEOTIDE SEQUENCE [LARGE SCALE GENOMIC DNA]</scope>
    <source>
        <strain>CJ2</strain>
    </source>
</reference>
<accession>A1VTL9</accession>
<dbReference type="EC" id="6.1.1.19" evidence="1"/>
<dbReference type="EMBL" id="CP000529">
    <property type="protein sequence ID" value="ABM38997.1"/>
    <property type="molecule type" value="Genomic_DNA"/>
</dbReference>
<dbReference type="RefSeq" id="WP_011803063.1">
    <property type="nucleotide sequence ID" value="NC_008781.1"/>
</dbReference>
<dbReference type="SMR" id="A1VTL9"/>
<dbReference type="STRING" id="365044.Pnap_3701"/>
<dbReference type="KEGG" id="pna:Pnap_3701"/>
<dbReference type="eggNOG" id="COG0018">
    <property type="taxonomic scope" value="Bacteria"/>
</dbReference>
<dbReference type="HOGENOM" id="CLU_006406_0_1_4"/>
<dbReference type="OrthoDB" id="9803211at2"/>
<dbReference type="Proteomes" id="UP000000644">
    <property type="component" value="Chromosome"/>
</dbReference>
<dbReference type="GO" id="GO:0005737">
    <property type="term" value="C:cytoplasm"/>
    <property type="evidence" value="ECO:0007669"/>
    <property type="project" value="UniProtKB-SubCell"/>
</dbReference>
<dbReference type="GO" id="GO:0004814">
    <property type="term" value="F:arginine-tRNA ligase activity"/>
    <property type="evidence" value="ECO:0007669"/>
    <property type="project" value="UniProtKB-UniRule"/>
</dbReference>
<dbReference type="GO" id="GO:0005524">
    <property type="term" value="F:ATP binding"/>
    <property type="evidence" value="ECO:0007669"/>
    <property type="project" value="UniProtKB-UniRule"/>
</dbReference>
<dbReference type="GO" id="GO:0006420">
    <property type="term" value="P:arginyl-tRNA aminoacylation"/>
    <property type="evidence" value="ECO:0007669"/>
    <property type="project" value="UniProtKB-UniRule"/>
</dbReference>
<dbReference type="CDD" id="cd07956">
    <property type="entry name" value="Anticodon_Ia_Arg"/>
    <property type="match status" value="1"/>
</dbReference>
<dbReference type="CDD" id="cd00671">
    <property type="entry name" value="ArgRS_core"/>
    <property type="match status" value="1"/>
</dbReference>
<dbReference type="FunFam" id="1.10.730.10:FF:000008">
    <property type="entry name" value="Arginine--tRNA ligase"/>
    <property type="match status" value="1"/>
</dbReference>
<dbReference type="FunFam" id="3.40.50.620:FF:000062">
    <property type="entry name" value="Arginine--tRNA ligase"/>
    <property type="match status" value="1"/>
</dbReference>
<dbReference type="Gene3D" id="3.30.1360.70">
    <property type="entry name" value="Arginyl tRNA synthetase N-terminal domain"/>
    <property type="match status" value="1"/>
</dbReference>
<dbReference type="Gene3D" id="3.40.50.620">
    <property type="entry name" value="HUPs"/>
    <property type="match status" value="1"/>
</dbReference>
<dbReference type="Gene3D" id="1.10.730.10">
    <property type="entry name" value="Isoleucyl-tRNA Synthetase, Domain 1"/>
    <property type="match status" value="1"/>
</dbReference>
<dbReference type="HAMAP" id="MF_00123">
    <property type="entry name" value="Arg_tRNA_synth"/>
    <property type="match status" value="1"/>
</dbReference>
<dbReference type="InterPro" id="IPR001412">
    <property type="entry name" value="aa-tRNA-synth_I_CS"/>
</dbReference>
<dbReference type="InterPro" id="IPR001278">
    <property type="entry name" value="Arg-tRNA-ligase"/>
</dbReference>
<dbReference type="InterPro" id="IPR005148">
    <property type="entry name" value="Arg-tRNA-synth_N"/>
</dbReference>
<dbReference type="InterPro" id="IPR036695">
    <property type="entry name" value="Arg-tRNA-synth_N_sf"/>
</dbReference>
<dbReference type="InterPro" id="IPR035684">
    <property type="entry name" value="ArgRS_core"/>
</dbReference>
<dbReference type="InterPro" id="IPR008909">
    <property type="entry name" value="DALR_anticod-bd"/>
</dbReference>
<dbReference type="InterPro" id="IPR014729">
    <property type="entry name" value="Rossmann-like_a/b/a_fold"/>
</dbReference>
<dbReference type="InterPro" id="IPR009080">
    <property type="entry name" value="tRNAsynth_Ia_anticodon-bd"/>
</dbReference>
<dbReference type="NCBIfam" id="TIGR00456">
    <property type="entry name" value="argS"/>
    <property type="match status" value="1"/>
</dbReference>
<dbReference type="PANTHER" id="PTHR11956:SF5">
    <property type="entry name" value="ARGININE--TRNA LIGASE, CYTOPLASMIC"/>
    <property type="match status" value="1"/>
</dbReference>
<dbReference type="PANTHER" id="PTHR11956">
    <property type="entry name" value="ARGINYL-TRNA SYNTHETASE"/>
    <property type="match status" value="1"/>
</dbReference>
<dbReference type="Pfam" id="PF03485">
    <property type="entry name" value="Arg_tRNA_synt_N"/>
    <property type="match status" value="1"/>
</dbReference>
<dbReference type="Pfam" id="PF05746">
    <property type="entry name" value="DALR_1"/>
    <property type="match status" value="1"/>
</dbReference>
<dbReference type="Pfam" id="PF00750">
    <property type="entry name" value="tRNA-synt_1d"/>
    <property type="match status" value="1"/>
</dbReference>
<dbReference type="PRINTS" id="PR01038">
    <property type="entry name" value="TRNASYNTHARG"/>
</dbReference>
<dbReference type="SMART" id="SM01016">
    <property type="entry name" value="Arg_tRNA_synt_N"/>
    <property type="match status" value="1"/>
</dbReference>
<dbReference type="SMART" id="SM00836">
    <property type="entry name" value="DALR_1"/>
    <property type="match status" value="1"/>
</dbReference>
<dbReference type="SUPFAM" id="SSF47323">
    <property type="entry name" value="Anticodon-binding domain of a subclass of class I aminoacyl-tRNA synthetases"/>
    <property type="match status" value="1"/>
</dbReference>
<dbReference type="SUPFAM" id="SSF55190">
    <property type="entry name" value="Arginyl-tRNA synthetase (ArgRS), N-terminal 'additional' domain"/>
    <property type="match status" value="1"/>
</dbReference>
<dbReference type="SUPFAM" id="SSF52374">
    <property type="entry name" value="Nucleotidylyl transferase"/>
    <property type="match status" value="1"/>
</dbReference>
<dbReference type="PROSITE" id="PS00178">
    <property type="entry name" value="AA_TRNA_LIGASE_I"/>
    <property type="match status" value="1"/>
</dbReference>
<protein>
    <recommendedName>
        <fullName evidence="1">Arginine--tRNA ligase</fullName>
        <ecNumber evidence="1">6.1.1.19</ecNumber>
    </recommendedName>
    <alternativeName>
        <fullName evidence="1">Arginyl-tRNA synthetase</fullName>
        <shortName evidence="1">ArgRS</shortName>
    </alternativeName>
</protein>
<name>SYR_POLNA</name>
<keyword id="KW-0030">Aminoacyl-tRNA synthetase</keyword>
<keyword id="KW-0067">ATP-binding</keyword>
<keyword id="KW-0963">Cytoplasm</keyword>
<keyword id="KW-0436">Ligase</keyword>
<keyword id="KW-0547">Nucleotide-binding</keyword>
<keyword id="KW-0648">Protein biosynthesis</keyword>
<keyword id="KW-1185">Reference proteome</keyword>